<keyword id="KW-0240">DNA-directed RNA polymerase</keyword>
<keyword id="KW-0548">Nucleotidyltransferase</keyword>
<keyword id="KW-0804">Transcription</keyword>
<keyword id="KW-0808">Transferase</keyword>
<dbReference type="EC" id="2.7.7.6" evidence="1"/>
<dbReference type="EMBL" id="CP001029">
    <property type="protein sequence ID" value="ACB81544.1"/>
    <property type="molecule type" value="Genomic_DNA"/>
</dbReference>
<dbReference type="RefSeq" id="WP_012455261.1">
    <property type="nucleotide sequence ID" value="NC_010725.1"/>
</dbReference>
<dbReference type="SMR" id="B1ZJQ8"/>
<dbReference type="STRING" id="441620.Mpop_3393"/>
<dbReference type="KEGG" id="mpo:Mpop_3393"/>
<dbReference type="eggNOG" id="COG1758">
    <property type="taxonomic scope" value="Bacteria"/>
</dbReference>
<dbReference type="HOGENOM" id="CLU_125406_2_0_5"/>
<dbReference type="OrthoDB" id="9796300at2"/>
<dbReference type="Proteomes" id="UP000007136">
    <property type="component" value="Chromosome"/>
</dbReference>
<dbReference type="GO" id="GO:0000428">
    <property type="term" value="C:DNA-directed RNA polymerase complex"/>
    <property type="evidence" value="ECO:0007669"/>
    <property type="project" value="UniProtKB-KW"/>
</dbReference>
<dbReference type="GO" id="GO:0003677">
    <property type="term" value="F:DNA binding"/>
    <property type="evidence" value="ECO:0007669"/>
    <property type="project" value="UniProtKB-UniRule"/>
</dbReference>
<dbReference type="GO" id="GO:0003899">
    <property type="term" value="F:DNA-directed RNA polymerase activity"/>
    <property type="evidence" value="ECO:0007669"/>
    <property type="project" value="UniProtKB-UniRule"/>
</dbReference>
<dbReference type="GO" id="GO:0006351">
    <property type="term" value="P:DNA-templated transcription"/>
    <property type="evidence" value="ECO:0007669"/>
    <property type="project" value="UniProtKB-UniRule"/>
</dbReference>
<dbReference type="Gene3D" id="3.90.940.10">
    <property type="match status" value="1"/>
</dbReference>
<dbReference type="HAMAP" id="MF_00366">
    <property type="entry name" value="RNApol_bact_RpoZ"/>
    <property type="match status" value="1"/>
</dbReference>
<dbReference type="InterPro" id="IPR003716">
    <property type="entry name" value="DNA-dir_RNA_pol_omega"/>
</dbReference>
<dbReference type="InterPro" id="IPR006110">
    <property type="entry name" value="Pol_omega/Rpo6/RPB6"/>
</dbReference>
<dbReference type="InterPro" id="IPR036161">
    <property type="entry name" value="RPB6/omega-like_sf"/>
</dbReference>
<dbReference type="NCBIfam" id="TIGR00690">
    <property type="entry name" value="rpoZ"/>
    <property type="match status" value="1"/>
</dbReference>
<dbReference type="PANTHER" id="PTHR34476">
    <property type="entry name" value="DNA-DIRECTED RNA POLYMERASE SUBUNIT OMEGA"/>
    <property type="match status" value="1"/>
</dbReference>
<dbReference type="PANTHER" id="PTHR34476:SF1">
    <property type="entry name" value="DNA-DIRECTED RNA POLYMERASE SUBUNIT OMEGA"/>
    <property type="match status" value="1"/>
</dbReference>
<dbReference type="Pfam" id="PF01192">
    <property type="entry name" value="RNA_pol_Rpb6"/>
    <property type="match status" value="1"/>
</dbReference>
<dbReference type="SMART" id="SM01409">
    <property type="entry name" value="RNA_pol_Rpb6"/>
    <property type="match status" value="1"/>
</dbReference>
<dbReference type="SUPFAM" id="SSF63562">
    <property type="entry name" value="RPB6/omega subunit-like"/>
    <property type="match status" value="1"/>
</dbReference>
<gene>
    <name evidence="1" type="primary">rpoZ</name>
    <name type="ordered locus">Mpop_3393</name>
</gene>
<reference key="1">
    <citation type="submission" date="2008-04" db="EMBL/GenBank/DDBJ databases">
        <title>Complete sequence of chromosome of Methylobacterium populi BJ001.</title>
        <authorList>
            <consortium name="US DOE Joint Genome Institute"/>
            <person name="Copeland A."/>
            <person name="Lucas S."/>
            <person name="Lapidus A."/>
            <person name="Glavina del Rio T."/>
            <person name="Dalin E."/>
            <person name="Tice H."/>
            <person name="Bruce D."/>
            <person name="Goodwin L."/>
            <person name="Pitluck S."/>
            <person name="Chertkov O."/>
            <person name="Brettin T."/>
            <person name="Detter J.C."/>
            <person name="Han C."/>
            <person name="Kuske C.R."/>
            <person name="Schmutz J."/>
            <person name="Larimer F."/>
            <person name="Land M."/>
            <person name="Hauser L."/>
            <person name="Kyrpides N."/>
            <person name="Mikhailova N."/>
            <person name="Marx C."/>
            <person name="Richardson P."/>
        </authorList>
    </citation>
    <scope>NUCLEOTIDE SEQUENCE [LARGE SCALE GENOMIC DNA]</scope>
    <source>
        <strain>ATCC BAA-705 / NCIMB 13946 / BJ001</strain>
    </source>
</reference>
<organism>
    <name type="scientific">Methylorubrum populi (strain ATCC BAA-705 / NCIMB 13946 / BJ001)</name>
    <name type="common">Methylobacterium populi</name>
    <dbReference type="NCBI Taxonomy" id="441620"/>
    <lineage>
        <taxon>Bacteria</taxon>
        <taxon>Pseudomonadati</taxon>
        <taxon>Pseudomonadota</taxon>
        <taxon>Alphaproteobacteria</taxon>
        <taxon>Hyphomicrobiales</taxon>
        <taxon>Methylobacteriaceae</taxon>
        <taxon>Methylorubrum</taxon>
    </lineage>
</organism>
<name>RPOZ_METPB</name>
<protein>
    <recommendedName>
        <fullName evidence="1">DNA-directed RNA polymerase subunit omega</fullName>
        <shortName evidence="1">RNAP omega subunit</shortName>
        <ecNumber evidence="1">2.7.7.6</ecNumber>
    </recommendedName>
    <alternativeName>
        <fullName evidence="1">RNA polymerase omega subunit</fullName>
    </alternativeName>
    <alternativeName>
        <fullName evidence="1">Transcriptase subunit omega</fullName>
    </alternativeName>
</protein>
<accession>B1ZJQ8</accession>
<feature type="chain" id="PRO_1000121245" description="DNA-directed RNA polymerase subunit omega">
    <location>
        <begin position="1"/>
        <end position="136"/>
    </location>
</feature>
<feature type="region of interest" description="Disordered" evidence="2">
    <location>
        <begin position="90"/>
        <end position="136"/>
    </location>
</feature>
<feature type="compositionally biased region" description="Low complexity" evidence="2">
    <location>
        <begin position="90"/>
        <end position="102"/>
    </location>
</feature>
<feature type="compositionally biased region" description="Basic and acidic residues" evidence="2">
    <location>
        <begin position="103"/>
        <end position="120"/>
    </location>
</feature>
<proteinExistence type="inferred from homology"/>
<sequence>MARVTVEDCIEKVENRFELVLLASHRARLLAAGAPLTVERDRDKNPVVALREIGDETITAEDLKEQLIHSMQKYVEVDEPEAETVPLLSSSPAAAAVAPQSSSDDKDVQFDRMSEEDLLRGLENLAPPTETDDEGE</sequence>
<comment type="function">
    <text evidence="1">Promotes RNA polymerase assembly. Latches the N- and C-terminal regions of the beta' subunit thereby facilitating its interaction with the beta and alpha subunits.</text>
</comment>
<comment type="catalytic activity">
    <reaction evidence="1">
        <text>RNA(n) + a ribonucleoside 5'-triphosphate = RNA(n+1) + diphosphate</text>
        <dbReference type="Rhea" id="RHEA:21248"/>
        <dbReference type="Rhea" id="RHEA-COMP:14527"/>
        <dbReference type="Rhea" id="RHEA-COMP:17342"/>
        <dbReference type="ChEBI" id="CHEBI:33019"/>
        <dbReference type="ChEBI" id="CHEBI:61557"/>
        <dbReference type="ChEBI" id="CHEBI:140395"/>
        <dbReference type="EC" id="2.7.7.6"/>
    </reaction>
</comment>
<comment type="subunit">
    <text evidence="1">The RNAP catalytic core consists of 2 alpha, 1 beta, 1 beta' and 1 omega subunit. When a sigma factor is associated with the core the holoenzyme is formed, which can initiate transcription.</text>
</comment>
<comment type="similarity">
    <text evidence="1">Belongs to the RNA polymerase subunit omega family.</text>
</comment>
<evidence type="ECO:0000255" key="1">
    <source>
        <dbReference type="HAMAP-Rule" id="MF_00366"/>
    </source>
</evidence>
<evidence type="ECO:0000256" key="2">
    <source>
        <dbReference type="SAM" id="MobiDB-lite"/>
    </source>
</evidence>